<reference key="1">
    <citation type="journal article" date="2009" name="PLoS Biol.">
        <title>Lineage-specific biology revealed by a finished genome assembly of the mouse.</title>
        <authorList>
            <person name="Church D.M."/>
            <person name="Goodstadt L."/>
            <person name="Hillier L.W."/>
            <person name="Zody M.C."/>
            <person name="Goldstein S."/>
            <person name="She X."/>
            <person name="Bult C.J."/>
            <person name="Agarwala R."/>
            <person name="Cherry J.L."/>
            <person name="DiCuccio M."/>
            <person name="Hlavina W."/>
            <person name="Kapustin Y."/>
            <person name="Meric P."/>
            <person name="Maglott D."/>
            <person name="Birtle Z."/>
            <person name="Marques A.C."/>
            <person name="Graves T."/>
            <person name="Zhou S."/>
            <person name="Teague B."/>
            <person name="Potamousis K."/>
            <person name="Churas C."/>
            <person name="Place M."/>
            <person name="Herschleb J."/>
            <person name="Runnheim R."/>
            <person name="Forrest D."/>
            <person name="Amos-Landgraf J."/>
            <person name="Schwartz D.C."/>
            <person name="Cheng Z."/>
            <person name="Lindblad-Toh K."/>
            <person name="Eichler E.E."/>
            <person name="Ponting C.P."/>
        </authorList>
    </citation>
    <scope>NUCLEOTIDE SEQUENCE [LARGE SCALE GENOMIC DNA]</scope>
    <source>
        <strain>C57BL/6J</strain>
    </source>
</reference>
<reference evidence="3" key="2">
    <citation type="journal article" date="2007" name="Genomics">
        <title>Atypical structure and phylogenomic evolution of the new eutherian oocyte- and embryo-expressed KHDC1/DPPA5/ECAT1/OOEP gene family.</title>
        <authorList>
            <person name="Pierre A."/>
            <person name="Gautier M."/>
            <person name="Callebaut I."/>
            <person name="Bontoux M."/>
            <person name="Jeanpierre E."/>
            <person name="Pontarotti P."/>
            <person name="Monget P."/>
        </authorList>
    </citation>
    <scope>IDENTIFICATION</scope>
</reference>
<sequence length="119" mass="13948">MMVTLVTRKDIPPWVKVPEDLTDPEVFQVQSLVLKYLFGPQGSRMSHIEQVSQAMFELKNLESPEELIEVFIYGYQSIKVRAKWLLQSMAERYHLRQQKRPSLTTFWEFGGPDVSLKEC</sequence>
<accession>P85965</accession>
<proteinExistence type="inferred from homology"/>
<keyword id="KW-0963">Cytoplasm</keyword>
<keyword id="KW-0217">Developmental protein</keyword>
<keyword id="KW-1185">Reference proteome</keyword>
<keyword id="KW-0694">RNA-binding</keyword>
<organism>
    <name type="scientific">Mus musculus</name>
    <name type="common">Mouse</name>
    <dbReference type="NCBI Taxonomy" id="10090"/>
    <lineage>
        <taxon>Eukaryota</taxon>
        <taxon>Metazoa</taxon>
        <taxon>Chordata</taxon>
        <taxon>Craniata</taxon>
        <taxon>Vertebrata</taxon>
        <taxon>Euteleostomi</taxon>
        <taxon>Mammalia</taxon>
        <taxon>Eutheria</taxon>
        <taxon>Euarchontoglires</taxon>
        <taxon>Glires</taxon>
        <taxon>Rodentia</taxon>
        <taxon>Myomorpha</taxon>
        <taxon>Muroidea</taxon>
        <taxon>Muridae</taxon>
        <taxon>Murinae</taxon>
        <taxon>Mus</taxon>
        <taxon>Mus</taxon>
    </lineage>
</organism>
<evidence type="ECO:0000250" key="1">
    <source>
        <dbReference type="UniProtKB" id="Q9CQS7"/>
    </source>
</evidence>
<evidence type="ECO:0000255" key="2"/>
<evidence type="ECO:0000305" key="3"/>
<evidence type="ECO:0000312" key="4">
    <source>
        <dbReference type="MGI" id="MGI:3765340"/>
    </source>
</evidence>
<evidence type="ECO:0000312" key="5">
    <source>
        <dbReference type="MGI" id="MGI:3765342"/>
    </source>
</evidence>
<dbReference type="EMBL" id="AC138587">
    <property type="status" value="NOT_ANNOTATED_CDS"/>
    <property type="molecule type" value="Genomic_DNA"/>
</dbReference>
<dbReference type="SMR" id="P85965"/>
<dbReference type="FunCoup" id="P85965">
    <property type="interactions" value="148"/>
</dbReference>
<dbReference type="PeptideAtlas" id="P85965"/>
<dbReference type="MGI" id="MGI:3765340">
    <property type="gene designation" value="Dppa5b"/>
</dbReference>
<dbReference type="MGI" id="MGI:3765342">
    <property type="gene designation" value="Dppa5c"/>
</dbReference>
<dbReference type="InParanoid" id="P85965"/>
<dbReference type="PRO" id="PR:P85965"/>
<dbReference type="Proteomes" id="UP000000589">
    <property type="component" value="Unplaced"/>
</dbReference>
<dbReference type="RNAct" id="P85965">
    <property type="molecule type" value="protein"/>
</dbReference>
<dbReference type="GO" id="GO:0005737">
    <property type="term" value="C:cytoplasm"/>
    <property type="evidence" value="ECO:0007669"/>
    <property type="project" value="UniProtKB-SubCell"/>
</dbReference>
<dbReference type="GO" id="GO:0003723">
    <property type="term" value="F:RNA binding"/>
    <property type="evidence" value="ECO:0007669"/>
    <property type="project" value="UniProtKB-KW"/>
</dbReference>
<dbReference type="Gene3D" id="3.30.1370.10">
    <property type="entry name" value="K Homology domain, type 1"/>
    <property type="match status" value="1"/>
</dbReference>
<dbReference type="InterPro" id="IPR036612">
    <property type="entry name" value="KH_dom_type_1_sf"/>
</dbReference>
<dbReference type="InterPro" id="IPR031952">
    <property type="entry name" value="MOEP19_KH-like"/>
</dbReference>
<dbReference type="PANTHER" id="PTHR31368">
    <property type="entry name" value="DEVELOPMENT PLURPOTENCY-ASSOCIATED PROTEIN 1/5 FAMILY MEMBER"/>
    <property type="match status" value="1"/>
</dbReference>
<dbReference type="PANTHER" id="PTHR31368:SF4">
    <property type="entry name" value="DEVELOPMENTAL PLURIPOTENCY-ASSOCIATED 5 PROTEIN"/>
    <property type="match status" value="1"/>
</dbReference>
<dbReference type="Pfam" id="PF16005">
    <property type="entry name" value="MOEP19"/>
    <property type="match status" value="1"/>
</dbReference>
<dbReference type="SUPFAM" id="SSF54791">
    <property type="entry name" value="Eukaryotic type KH-domain (KH-domain type I)"/>
    <property type="match status" value="1"/>
</dbReference>
<protein>
    <recommendedName>
        <fullName>Developmental pluripotency-associated protein 5B/5C</fullName>
    </recommendedName>
</protein>
<comment type="function">
    <text evidence="1">Involved in the maintenance of embryonic stem (ES) cell pluripotency. Dispensable for self-renewal of pluripotent ES cells and establishment of germ cells. Associates with specific target mRNAs (By similarity).</text>
</comment>
<comment type="subcellular location">
    <subcellularLocation>
        <location evidence="1">Cytoplasm</location>
    </subcellularLocation>
</comment>
<comment type="similarity">
    <text evidence="2">Belongs to the KHDC1 family.</text>
</comment>
<gene>
    <name evidence="4" type="primary">Dppa5b</name>
</gene>
<gene>
    <name evidence="5" type="primary">Dppa5c</name>
</gene>
<feature type="chain" id="PRO_0000347270" description="Developmental pluripotency-associated protein 5B/5C">
    <location>
        <begin position="1"/>
        <end position="119"/>
    </location>
</feature>
<feature type="domain" description="KH; atypical" evidence="2">
    <location>
        <begin position="24"/>
        <end position="86"/>
    </location>
</feature>
<name>DPA5B_MOUSE</name>